<protein>
    <recommendedName>
        <fullName evidence="2">Small ribosomal subunit protein uS15c</fullName>
    </recommendedName>
    <alternativeName>
        <fullName>30S ribosomal protein S15, chloroplastic</fullName>
    </alternativeName>
</protein>
<reference key="1">
    <citation type="journal article" date="2007" name="Mol. Phylogenet. Evol.">
        <title>Phylogenetic and evolutionary implications of complete chloroplast genome sequences of four early-diverging angiosperms: Buxus (Buxaceae), Chloranthus (Chloranthaceae), Dioscorea (Dioscoreaceae), and Illicium (Schisandraceae).</title>
        <authorList>
            <person name="Hansen D.R."/>
            <person name="Dastidar S.G."/>
            <person name="Cai Z."/>
            <person name="Penaflor C."/>
            <person name="Kuehl J.V."/>
            <person name="Boore J.L."/>
            <person name="Jansen R.K."/>
        </authorList>
    </citation>
    <scope>NUCLEOTIDE SEQUENCE [LARGE SCALE GENOMIC DNA]</scope>
</reference>
<accession>A6MN02</accession>
<geneLocation type="chloroplast"/>
<organism>
    <name type="scientific">Illicium oligandrum</name>
    <name type="common">Star anise</name>
    <dbReference type="NCBI Taxonomy" id="145286"/>
    <lineage>
        <taxon>Eukaryota</taxon>
        <taxon>Viridiplantae</taxon>
        <taxon>Streptophyta</taxon>
        <taxon>Embryophyta</taxon>
        <taxon>Tracheophyta</taxon>
        <taxon>Spermatophyta</taxon>
        <taxon>Magnoliopsida</taxon>
        <taxon>Austrobaileyales</taxon>
        <taxon>Schisandraceae</taxon>
        <taxon>Illicium</taxon>
    </lineage>
</organism>
<feature type="chain" id="PRO_0000354260" description="Small ribosomal subunit protein uS15c">
    <location>
        <begin position="1"/>
        <end position="87"/>
    </location>
</feature>
<evidence type="ECO:0000250" key="1"/>
<evidence type="ECO:0000305" key="2"/>
<proteinExistence type="inferred from homology"/>
<comment type="subunit">
    <text evidence="1">Part of the 30S ribosomal subunit.</text>
</comment>
<comment type="subcellular location">
    <subcellularLocation>
        <location>Plastid</location>
        <location>Chloroplast</location>
    </subcellularLocation>
</comment>
<comment type="similarity">
    <text evidence="2">Belongs to the universal ribosomal protein uS15 family.</text>
</comment>
<name>RR15_ILLOL</name>
<dbReference type="EMBL" id="EF380354">
    <property type="protein sequence ID" value="ABQ52577.1"/>
    <property type="molecule type" value="Genomic_DNA"/>
</dbReference>
<dbReference type="RefSeq" id="YP_001294328.1">
    <property type="nucleotide sequence ID" value="NC_009600.1"/>
</dbReference>
<dbReference type="SMR" id="A6MN02"/>
<dbReference type="GeneID" id="5236708"/>
<dbReference type="GO" id="GO:0009507">
    <property type="term" value="C:chloroplast"/>
    <property type="evidence" value="ECO:0007669"/>
    <property type="project" value="UniProtKB-SubCell"/>
</dbReference>
<dbReference type="GO" id="GO:1990904">
    <property type="term" value="C:ribonucleoprotein complex"/>
    <property type="evidence" value="ECO:0007669"/>
    <property type="project" value="UniProtKB-KW"/>
</dbReference>
<dbReference type="GO" id="GO:0005840">
    <property type="term" value="C:ribosome"/>
    <property type="evidence" value="ECO:0007669"/>
    <property type="project" value="UniProtKB-KW"/>
</dbReference>
<dbReference type="GO" id="GO:0003735">
    <property type="term" value="F:structural constituent of ribosome"/>
    <property type="evidence" value="ECO:0007669"/>
    <property type="project" value="InterPro"/>
</dbReference>
<dbReference type="GO" id="GO:0006412">
    <property type="term" value="P:translation"/>
    <property type="evidence" value="ECO:0007669"/>
    <property type="project" value="UniProtKB-UniRule"/>
</dbReference>
<dbReference type="CDD" id="cd00353">
    <property type="entry name" value="Ribosomal_S15p_S13e"/>
    <property type="match status" value="1"/>
</dbReference>
<dbReference type="Gene3D" id="1.10.287.10">
    <property type="entry name" value="S15/NS1, RNA-binding"/>
    <property type="match status" value="1"/>
</dbReference>
<dbReference type="HAMAP" id="MF_01343_B">
    <property type="entry name" value="Ribosomal_uS15_B"/>
    <property type="match status" value="1"/>
</dbReference>
<dbReference type="InterPro" id="IPR000589">
    <property type="entry name" value="Ribosomal_uS15"/>
</dbReference>
<dbReference type="InterPro" id="IPR005290">
    <property type="entry name" value="Ribosomal_uS15_bac-type"/>
</dbReference>
<dbReference type="InterPro" id="IPR009068">
    <property type="entry name" value="uS15_NS1_RNA-bd_sf"/>
</dbReference>
<dbReference type="NCBIfam" id="TIGR00952">
    <property type="entry name" value="S15_bact"/>
    <property type="match status" value="1"/>
</dbReference>
<dbReference type="PANTHER" id="PTHR23321">
    <property type="entry name" value="RIBOSOMAL PROTEIN S15, BACTERIAL AND ORGANELLAR"/>
    <property type="match status" value="1"/>
</dbReference>
<dbReference type="PANTHER" id="PTHR23321:SF26">
    <property type="entry name" value="SMALL RIBOSOMAL SUBUNIT PROTEIN US15M"/>
    <property type="match status" value="1"/>
</dbReference>
<dbReference type="Pfam" id="PF00312">
    <property type="entry name" value="Ribosomal_S15"/>
    <property type="match status" value="1"/>
</dbReference>
<dbReference type="SMART" id="SM01387">
    <property type="entry name" value="Ribosomal_S15"/>
    <property type="match status" value="1"/>
</dbReference>
<dbReference type="SUPFAM" id="SSF47060">
    <property type="entry name" value="S15/NS1 RNA-binding domain"/>
    <property type="match status" value="1"/>
</dbReference>
<dbReference type="PROSITE" id="PS00362">
    <property type="entry name" value="RIBOSOMAL_S15"/>
    <property type="match status" value="1"/>
</dbReference>
<keyword id="KW-0150">Chloroplast</keyword>
<keyword id="KW-0934">Plastid</keyword>
<keyword id="KW-0687">Ribonucleoprotein</keyword>
<keyword id="KW-0689">Ribosomal protein</keyword>
<sequence>MVKKSFILVIPQEEKKGSVEFQVSSFTNKIRRLTSHLELHRKDYLSQRGLRRILGKRQRLLAYLSKKNRVRYKELISQLDIREPKTH</sequence>
<gene>
    <name type="primary">rps15</name>
</gene>